<protein>
    <recommendedName>
        <fullName evidence="1">Bifunctional protein GlmU</fullName>
    </recommendedName>
    <domain>
        <recommendedName>
            <fullName evidence="1">UDP-N-acetylglucosamine pyrophosphorylase</fullName>
            <ecNumber evidence="1">2.7.7.23</ecNumber>
        </recommendedName>
        <alternativeName>
            <fullName evidence="1">N-acetylglucosamine-1-phosphate uridyltransferase</fullName>
        </alternativeName>
    </domain>
    <domain>
        <recommendedName>
            <fullName evidence="1">Glucosamine-1-phosphate N-acetyltransferase</fullName>
            <ecNumber evidence="1">2.3.1.157</ecNumber>
        </recommendedName>
    </domain>
</protein>
<reference key="1">
    <citation type="journal article" date="2002" name="Nature">
        <title>Comparison of the genomes of two Xanthomonas pathogens with differing host specificities.</title>
        <authorList>
            <person name="da Silva A.C.R."/>
            <person name="Ferro J.A."/>
            <person name="Reinach F.C."/>
            <person name="Farah C.S."/>
            <person name="Furlan L.R."/>
            <person name="Quaggio R.B."/>
            <person name="Monteiro-Vitorello C.B."/>
            <person name="Van Sluys M.A."/>
            <person name="Almeida N.F. Jr."/>
            <person name="Alves L.M.C."/>
            <person name="do Amaral A.M."/>
            <person name="Bertolini M.C."/>
            <person name="Camargo L.E.A."/>
            <person name="Camarotte G."/>
            <person name="Cannavan F."/>
            <person name="Cardozo J."/>
            <person name="Chambergo F."/>
            <person name="Ciapina L.P."/>
            <person name="Cicarelli R.M.B."/>
            <person name="Coutinho L.L."/>
            <person name="Cursino-Santos J.R."/>
            <person name="El-Dorry H."/>
            <person name="Faria J.B."/>
            <person name="Ferreira A.J.S."/>
            <person name="Ferreira R.C.C."/>
            <person name="Ferro M.I.T."/>
            <person name="Formighieri E.F."/>
            <person name="Franco M.C."/>
            <person name="Greggio C.C."/>
            <person name="Gruber A."/>
            <person name="Katsuyama A.M."/>
            <person name="Kishi L.T."/>
            <person name="Leite R.P."/>
            <person name="Lemos E.G.M."/>
            <person name="Lemos M.V.F."/>
            <person name="Locali E.C."/>
            <person name="Machado M.A."/>
            <person name="Madeira A.M.B.N."/>
            <person name="Martinez-Rossi N.M."/>
            <person name="Martins E.C."/>
            <person name="Meidanis J."/>
            <person name="Menck C.F.M."/>
            <person name="Miyaki C.Y."/>
            <person name="Moon D.H."/>
            <person name="Moreira L.M."/>
            <person name="Novo M.T.M."/>
            <person name="Okura V.K."/>
            <person name="Oliveira M.C."/>
            <person name="Oliveira V.R."/>
            <person name="Pereira H.A."/>
            <person name="Rossi A."/>
            <person name="Sena J.A.D."/>
            <person name="Silva C."/>
            <person name="de Souza R.F."/>
            <person name="Spinola L.A.F."/>
            <person name="Takita M.A."/>
            <person name="Tamura R.E."/>
            <person name="Teixeira E.C."/>
            <person name="Tezza R.I.D."/>
            <person name="Trindade dos Santos M."/>
            <person name="Truffi D."/>
            <person name="Tsai S.M."/>
            <person name="White F.F."/>
            <person name="Setubal J.C."/>
            <person name="Kitajima J.P."/>
        </authorList>
    </citation>
    <scope>NUCLEOTIDE SEQUENCE [LARGE SCALE GENOMIC DNA]</scope>
    <source>
        <strain>306</strain>
    </source>
</reference>
<accession>Q8PGH2</accession>
<name>GLMU_XANAC</name>
<evidence type="ECO:0000255" key="1">
    <source>
        <dbReference type="HAMAP-Rule" id="MF_01631"/>
    </source>
</evidence>
<evidence type="ECO:0000305" key="2"/>
<sequence>MTLPLHVLILAAGEGKRMRSSLPKVLQPLAGQPMLAHVIATARQLQPAAIHIVYGHGGDQVQAAFADQGDLQWAEQREQLGTGHAVQQAMPAIPDAATVLVLYGDVPLIRSESLLQLLHAPGRMAVLVAELANPTGYGRILRDAEGKVAAIVEQKDANDEQRRIRTINTGILTAESTALRRWLAGLSNDNAQAEFYLTDVFASAAADFTPADMVHVADPQDVEGANDPWQLAQLERAWQLRAARTLCLQGVRMADPARVEQRGSVQVGRDVQLDIDVILEGNVTLGDDVVIGPFVRLRDVTLGAGTQVRAHSDLEGVITEGAVQIGPFARLRPGTVLADGVHIGNFVETKKVTMGVGSKANHLTYLGDAVIGSKVNIGAGTITCNYDGVNKSQTTIGDGAFIGSNSALVAPIQIGANSTIGAGSVITSDAPAGQLSVTRARQTVVEGWKRPTKKSP</sequence>
<dbReference type="EC" id="2.7.7.23" evidence="1"/>
<dbReference type="EC" id="2.3.1.157" evidence="1"/>
<dbReference type="EMBL" id="AE008923">
    <property type="protein sequence ID" value="AAM38487.1"/>
    <property type="status" value="ALT_INIT"/>
    <property type="molecule type" value="Genomic_DNA"/>
</dbReference>
<dbReference type="RefSeq" id="WP_015463628.1">
    <property type="nucleotide sequence ID" value="NC_003919.1"/>
</dbReference>
<dbReference type="SMR" id="Q8PGH2"/>
<dbReference type="GeneID" id="66912677"/>
<dbReference type="KEGG" id="xac:XAC3644"/>
<dbReference type="eggNOG" id="COG1207">
    <property type="taxonomic scope" value="Bacteria"/>
</dbReference>
<dbReference type="HOGENOM" id="CLU_029499_15_2_6"/>
<dbReference type="UniPathway" id="UPA00113">
    <property type="reaction ID" value="UER00532"/>
</dbReference>
<dbReference type="UniPathway" id="UPA00113">
    <property type="reaction ID" value="UER00533"/>
</dbReference>
<dbReference type="UniPathway" id="UPA00973"/>
<dbReference type="Proteomes" id="UP000000576">
    <property type="component" value="Chromosome"/>
</dbReference>
<dbReference type="GO" id="GO:0005737">
    <property type="term" value="C:cytoplasm"/>
    <property type="evidence" value="ECO:0007669"/>
    <property type="project" value="UniProtKB-SubCell"/>
</dbReference>
<dbReference type="GO" id="GO:0016020">
    <property type="term" value="C:membrane"/>
    <property type="evidence" value="ECO:0007669"/>
    <property type="project" value="GOC"/>
</dbReference>
<dbReference type="GO" id="GO:0019134">
    <property type="term" value="F:glucosamine-1-phosphate N-acetyltransferase activity"/>
    <property type="evidence" value="ECO:0007669"/>
    <property type="project" value="UniProtKB-UniRule"/>
</dbReference>
<dbReference type="GO" id="GO:0000287">
    <property type="term" value="F:magnesium ion binding"/>
    <property type="evidence" value="ECO:0007669"/>
    <property type="project" value="UniProtKB-UniRule"/>
</dbReference>
<dbReference type="GO" id="GO:0003977">
    <property type="term" value="F:UDP-N-acetylglucosamine diphosphorylase activity"/>
    <property type="evidence" value="ECO:0007669"/>
    <property type="project" value="UniProtKB-UniRule"/>
</dbReference>
<dbReference type="GO" id="GO:0000902">
    <property type="term" value="P:cell morphogenesis"/>
    <property type="evidence" value="ECO:0007669"/>
    <property type="project" value="UniProtKB-UniRule"/>
</dbReference>
<dbReference type="GO" id="GO:0071555">
    <property type="term" value="P:cell wall organization"/>
    <property type="evidence" value="ECO:0007669"/>
    <property type="project" value="UniProtKB-KW"/>
</dbReference>
<dbReference type="GO" id="GO:0009245">
    <property type="term" value="P:lipid A biosynthetic process"/>
    <property type="evidence" value="ECO:0007669"/>
    <property type="project" value="UniProtKB-UniRule"/>
</dbReference>
<dbReference type="GO" id="GO:0009252">
    <property type="term" value="P:peptidoglycan biosynthetic process"/>
    <property type="evidence" value="ECO:0007669"/>
    <property type="project" value="UniProtKB-UniRule"/>
</dbReference>
<dbReference type="GO" id="GO:0008360">
    <property type="term" value="P:regulation of cell shape"/>
    <property type="evidence" value="ECO:0007669"/>
    <property type="project" value="UniProtKB-KW"/>
</dbReference>
<dbReference type="GO" id="GO:0006048">
    <property type="term" value="P:UDP-N-acetylglucosamine biosynthetic process"/>
    <property type="evidence" value="ECO:0007669"/>
    <property type="project" value="UniProtKB-UniPathway"/>
</dbReference>
<dbReference type="CDD" id="cd02540">
    <property type="entry name" value="GT2_GlmU_N_bac"/>
    <property type="match status" value="1"/>
</dbReference>
<dbReference type="CDD" id="cd03353">
    <property type="entry name" value="LbH_GlmU_C"/>
    <property type="match status" value="1"/>
</dbReference>
<dbReference type="Gene3D" id="2.160.10.10">
    <property type="entry name" value="Hexapeptide repeat proteins"/>
    <property type="match status" value="1"/>
</dbReference>
<dbReference type="Gene3D" id="3.90.550.10">
    <property type="entry name" value="Spore Coat Polysaccharide Biosynthesis Protein SpsA, Chain A"/>
    <property type="match status" value="1"/>
</dbReference>
<dbReference type="HAMAP" id="MF_01631">
    <property type="entry name" value="GlmU"/>
    <property type="match status" value="1"/>
</dbReference>
<dbReference type="InterPro" id="IPR005882">
    <property type="entry name" value="Bifunctional_GlmU"/>
</dbReference>
<dbReference type="InterPro" id="IPR050065">
    <property type="entry name" value="GlmU-like"/>
</dbReference>
<dbReference type="InterPro" id="IPR038009">
    <property type="entry name" value="GlmU_C_LbH"/>
</dbReference>
<dbReference type="InterPro" id="IPR001451">
    <property type="entry name" value="Hexapep"/>
</dbReference>
<dbReference type="InterPro" id="IPR018357">
    <property type="entry name" value="Hexapep_transf_CS"/>
</dbReference>
<dbReference type="InterPro" id="IPR025877">
    <property type="entry name" value="MobA-like_NTP_Trfase"/>
</dbReference>
<dbReference type="InterPro" id="IPR029044">
    <property type="entry name" value="Nucleotide-diphossugar_trans"/>
</dbReference>
<dbReference type="InterPro" id="IPR011004">
    <property type="entry name" value="Trimer_LpxA-like_sf"/>
</dbReference>
<dbReference type="NCBIfam" id="TIGR01173">
    <property type="entry name" value="glmU"/>
    <property type="match status" value="1"/>
</dbReference>
<dbReference type="PANTHER" id="PTHR43584:SF3">
    <property type="entry name" value="BIFUNCTIONAL PROTEIN GLMU"/>
    <property type="match status" value="1"/>
</dbReference>
<dbReference type="PANTHER" id="PTHR43584">
    <property type="entry name" value="NUCLEOTIDYL TRANSFERASE"/>
    <property type="match status" value="1"/>
</dbReference>
<dbReference type="Pfam" id="PF00132">
    <property type="entry name" value="Hexapep"/>
    <property type="match status" value="2"/>
</dbReference>
<dbReference type="Pfam" id="PF12804">
    <property type="entry name" value="NTP_transf_3"/>
    <property type="match status" value="1"/>
</dbReference>
<dbReference type="SUPFAM" id="SSF53448">
    <property type="entry name" value="Nucleotide-diphospho-sugar transferases"/>
    <property type="match status" value="1"/>
</dbReference>
<dbReference type="SUPFAM" id="SSF51161">
    <property type="entry name" value="Trimeric LpxA-like enzymes"/>
    <property type="match status" value="1"/>
</dbReference>
<dbReference type="PROSITE" id="PS00101">
    <property type="entry name" value="HEXAPEP_TRANSFERASES"/>
    <property type="match status" value="1"/>
</dbReference>
<organism>
    <name type="scientific">Xanthomonas axonopodis pv. citri (strain 306)</name>
    <dbReference type="NCBI Taxonomy" id="190486"/>
    <lineage>
        <taxon>Bacteria</taxon>
        <taxon>Pseudomonadati</taxon>
        <taxon>Pseudomonadota</taxon>
        <taxon>Gammaproteobacteria</taxon>
        <taxon>Lysobacterales</taxon>
        <taxon>Lysobacteraceae</taxon>
        <taxon>Xanthomonas</taxon>
    </lineage>
</organism>
<feature type="chain" id="PRO_0000233881" description="Bifunctional protein GlmU">
    <location>
        <begin position="1"/>
        <end position="456"/>
    </location>
</feature>
<feature type="region of interest" description="Pyrophosphorylase" evidence="1">
    <location>
        <begin position="1"/>
        <end position="228"/>
    </location>
</feature>
<feature type="region of interest" description="Linker" evidence="1">
    <location>
        <begin position="229"/>
        <end position="249"/>
    </location>
</feature>
<feature type="region of interest" description="N-acetyltransferase" evidence="1">
    <location>
        <begin position="250"/>
        <end position="456"/>
    </location>
</feature>
<feature type="active site" description="Proton acceptor" evidence="1">
    <location>
        <position position="362"/>
    </location>
</feature>
<feature type="binding site" evidence="1">
    <location>
        <begin position="10"/>
        <end position="13"/>
    </location>
    <ligand>
        <name>UDP-N-acetyl-alpha-D-glucosamine</name>
        <dbReference type="ChEBI" id="CHEBI:57705"/>
    </ligand>
</feature>
<feature type="binding site" evidence="1">
    <location>
        <position position="24"/>
    </location>
    <ligand>
        <name>UDP-N-acetyl-alpha-D-glucosamine</name>
        <dbReference type="ChEBI" id="CHEBI:57705"/>
    </ligand>
</feature>
<feature type="binding site" evidence="1">
    <location>
        <position position="76"/>
    </location>
    <ligand>
        <name>UDP-N-acetyl-alpha-D-glucosamine</name>
        <dbReference type="ChEBI" id="CHEBI:57705"/>
    </ligand>
</feature>
<feature type="binding site" evidence="1">
    <location>
        <begin position="81"/>
        <end position="82"/>
    </location>
    <ligand>
        <name>UDP-N-acetyl-alpha-D-glucosamine</name>
        <dbReference type="ChEBI" id="CHEBI:57705"/>
    </ligand>
</feature>
<feature type="binding site" evidence="1">
    <location>
        <begin position="103"/>
        <end position="105"/>
    </location>
    <ligand>
        <name>UDP-N-acetyl-alpha-D-glucosamine</name>
        <dbReference type="ChEBI" id="CHEBI:57705"/>
    </ligand>
</feature>
<feature type="binding site" evidence="1">
    <location>
        <position position="105"/>
    </location>
    <ligand>
        <name>Mg(2+)</name>
        <dbReference type="ChEBI" id="CHEBI:18420"/>
    </ligand>
</feature>
<feature type="binding site" evidence="1">
    <location>
        <position position="138"/>
    </location>
    <ligand>
        <name>UDP-N-acetyl-alpha-D-glucosamine</name>
        <dbReference type="ChEBI" id="CHEBI:57705"/>
    </ligand>
</feature>
<feature type="binding site" evidence="1">
    <location>
        <position position="153"/>
    </location>
    <ligand>
        <name>UDP-N-acetyl-alpha-D-glucosamine</name>
        <dbReference type="ChEBI" id="CHEBI:57705"/>
    </ligand>
</feature>
<feature type="binding site" evidence="1">
    <location>
        <position position="168"/>
    </location>
    <ligand>
        <name>UDP-N-acetyl-alpha-D-glucosamine</name>
        <dbReference type="ChEBI" id="CHEBI:57705"/>
    </ligand>
</feature>
<feature type="binding site" evidence="1">
    <location>
        <position position="226"/>
    </location>
    <ligand>
        <name>Mg(2+)</name>
        <dbReference type="ChEBI" id="CHEBI:18420"/>
    </ligand>
</feature>
<feature type="binding site" evidence="1">
    <location>
        <position position="226"/>
    </location>
    <ligand>
        <name>UDP-N-acetyl-alpha-D-glucosamine</name>
        <dbReference type="ChEBI" id="CHEBI:57705"/>
    </ligand>
</feature>
<feature type="binding site" evidence="1">
    <location>
        <position position="332"/>
    </location>
    <ligand>
        <name>UDP-N-acetyl-alpha-D-glucosamine</name>
        <dbReference type="ChEBI" id="CHEBI:57705"/>
    </ligand>
</feature>
<feature type="binding site" evidence="1">
    <location>
        <position position="350"/>
    </location>
    <ligand>
        <name>UDP-N-acetyl-alpha-D-glucosamine</name>
        <dbReference type="ChEBI" id="CHEBI:57705"/>
    </ligand>
</feature>
<feature type="binding site" evidence="1">
    <location>
        <position position="365"/>
    </location>
    <ligand>
        <name>UDP-N-acetyl-alpha-D-glucosamine</name>
        <dbReference type="ChEBI" id="CHEBI:57705"/>
    </ligand>
</feature>
<feature type="binding site" evidence="1">
    <location>
        <position position="376"/>
    </location>
    <ligand>
        <name>UDP-N-acetyl-alpha-D-glucosamine</name>
        <dbReference type="ChEBI" id="CHEBI:57705"/>
    </ligand>
</feature>
<feature type="binding site" evidence="1">
    <location>
        <position position="379"/>
    </location>
    <ligand>
        <name>acetyl-CoA</name>
        <dbReference type="ChEBI" id="CHEBI:57288"/>
    </ligand>
</feature>
<feature type="binding site" evidence="1">
    <location>
        <begin position="385"/>
        <end position="386"/>
    </location>
    <ligand>
        <name>acetyl-CoA</name>
        <dbReference type="ChEBI" id="CHEBI:57288"/>
    </ligand>
</feature>
<feature type="binding site" evidence="1">
    <location>
        <position position="404"/>
    </location>
    <ligand>
        <name>acetyl-CoA</name>
        <dbReference type="ChEBI" id="CHEBI:57288"/>
    </ligand>
</feature>
<feature type="binding site" evidence="1">
    <location>
        <position position="422"/>
    </location>
    <ligand>
        <name>acetyl-CoA</name>
        <dbReference type="ChEBI" id="CHEBI:57288"/>
    </ligand>
</feature>
<feature type="binding site" evidence="1">
    <location>
        <position position="439"/>
    </location>
    <ligand>
        <name>acetyl-CoA</name>
        <dbReference type="ChEBI" id="CHEBI:57288"/>
    </ligand>
</feature>
<proteinExistence type="inferred from homology"/>
<gene>
    <name evidence="1" type="primary">glmU</name>
    <name type="ordered locus">XAC3644</name>
</gene>
<keyword id="KW-0012">Acyltransferase</keyword>
<keyword id="KW-0133">Cell shape</keyword>
<keyword id="KW-0961">Cell wall biogenesis/degradation</keyword>
<keyword id="KW-0963">Cytoplasm</keyword>
<keyword id="KW-0460">Magnesium</keyword>
<keyword id="KW-0479">Metal-binding</keyword>
<keyword id="KW-0511">Multifunctional enzyme</keyword>
<keyword id="KW-0548">Nucleotidyltransferase</keyword>
<keyword id="KW-0573">Peptidoglycan synthesis</keyword>
<keyword id="KW-0677">Repeat</keyword>
<keyword id="KW-0808">Transferase</keyword>
<comment type="function">
    <text evidence="1">Catalyzes the last two sequential reactions in the de novo biosynthetic pathway for UDP-N-acetylglucosamine (UDP-GlcNAc). The C-terminal domain catalyzes the transfer of acetyl group from acetyl coenzyme A to glucosamine-1-phosphate (GlcN-1-P) to produce N-acetylglucosamine-1-phosphate (GlcNAc-1-P), which is converted into UDP-GlcNAc by the transfer of uridine 5-monophosphate (from uridine 5-triphosphate), a reaction catalyzed by the N-terminal domain.</text>
</comment>
<comment type="catalytic activity">
    <reaction evidence="1">
        <text>alpha-D-glucosamine 1-phosphate + acetyl-CoA = N-acetyl-alpha-D-glucosamine 1-phosphate + CoA + H(+)</text>
        <dbReference type="Rhea" id="RHEA:13725"/>
        <dbReference type="ChEBI" id="CHEBI:15378"/>
        <dbReference type="ChEBI" id="CHEBI:57287"/>
        <dbReference type="ChEBI" id="CHEBI:57288"/>
        <dbReference type="ChEBI" id="CHEBI:57776"/>
        <dbReference type="ChEBI" id="CHEBI:58516"/>
        <dbReference type="EC" id="2.3.1.157"/>
    </reaction>
</comment>
<comment type="catalytic activity">
    <reaction evidence="1">
        <text>N-acetyl-alpha-D-glucosamine 1-phosphate + UTP + H(+) = UDP-N-acetyl-alpha-D-glucosamine + diphosphate</text>
        <dbReference type="Rhea" id="RHEA:13509"/>
        <dbReference type="ChEBI" id="CHEBI:15378"/>
        <dbReference type="ChEBI" id="CHEBI:33019"/>
        <dbReference type="ChEBI" id="CHEBI:46398"/>
        <dbReference type="ChEBI" id="CHEBI:57705"/>
        <dbReference type="ChEBI" id="CHEBI:57776"/>
        <dbReference type="EC" id="2.7.7.23"/>
    </reaction>
</comment>
<comment type="cofactor">
    <cofactor evidence="1">
        <name>Mg(2+)</name>
        <dbReference type="ChEBI" id="CHEBI:18420"/>
    </cofactor>
    <text evidence="1">Binds 1 Mg(2+) ion per subunit.</text>
</comment>
<comment type="pathway">
    <text evidence="1">Nucleotide-sugar biosynthesis; UDP-N-acetyl-alpha-D-glucosamine biosynthesis; N-acetyl-alpha-D-glucosamine 1-phosphate from alpha-D-glucosamine 6-phosphate (route II): step 2/2.</text>
</comment>
<comment type="pathway">
    <text evidence="1">Nucleotide-sugar biosynthesis; UDP-N-acetyl-alpha-D-glucosamine biosynthesis; UDP-N-acetyl-alpha-D-glucosamine from N-acetyl-alpha-D-glucosamine 1-phosphate: step 1/1.</text>
</comment>
<comment type="pathway">
    <text evidence="1">Bacterial outer membrane biogenesis; LPS lipid A biosynthesis.</text>
</comment>
<comment type="subunit">
    <text evidence="1">Homotrimer.</text>
</comment>
<comment type="subcellular location">
    <subcellularLocation>
        <location evidence="1">Cytoplasm</location>
    </subcellularLocation>
</comment>
<comment type="similarity">
    <text evidence="1">In the N-terminal section; belongs to the N-acetylglucosamine-1-phosphate uridyltransferase family.</text>
</comment>
<comment type="similarity">
    <text evidence="1">In the C-terminal section; belongs to the transferase hexapeptide repeat family.</text>
</comment>
<comment type="sequence caution" evidence="2">
    <conflict type="erroneous initiation">
        <sequence resource="EMBL-CDS" id="AAM38487"/>
    </conflict>
</comment>